<sequence>MIGIIGAMEEEVTILKNKLTQLSEISVAHVKFYTGILKDREVVITQSGIGKVNAAISTTLLINKFKPDVIINTGSAGALDESLNVGDVLISDDVKYHDADATAFGYEYGQIPQMPVAFQSSKPLIEKVSQVVQQQQLTAKVGLIVSGDSFIGSVEQRQKIKKAFPNAMAVEMEATAIAQTCYQFNVPFVVVRAVSDLANGEAEMSFEAFLEKAAVSSSQTVEALVSQL</sequence>
<comment type="function">
    <text evidence="1">Catalyzes the irreversible cleavage of the glycosidic bond in both 5'-methylthioadenosine (MTA) and S-adenosylhomocysteine (SAH/AdoHcy) to adenine and the corresponding thioribose, 5'-methylthioribose and S-ribosylhomocysteine, respectively. Also cleaves 5'-deoxyadenosine, a toxic by-product of radical S-adenosylmethionine (SAM) enzymes, into 5-deoxyribose and adenine.</text>
</comment>
<comment type="catalytic activity">
    <reaction evidence="1">
        <text>S-adenosyl-L-homocysteine + H2O = S-(5-deoxy-D-ribos-5-yl)-L-homocysteine + adenine</text>
        <dbReference type="Rhea" id="RHEA:17805"/>
        <dbReference type="ChEBI" id="CHEBI:15377"/>
        <dbReference type="ChEBI" id="CHEBI:16708"/>
        <dbReference type="ChEBI" id="CHEBI:57856"/>
        <dbReference type="ChEBI" id="CHEBI:58195"/>
        <dbReference type="EC" id="3.2.2.9"/>
    </reaction>
</comment>
<comment type="catalytic activity">
    <reaction evidence="1">
        <text>S-methyl-5'-thioadenosine + H2O = 5-(methylsulfanyl)-D-ribose + adenine</text>
        <dbReference type="Rhea" id="RHEA:13617"/>
        <dbReference type="ChEBI" id="CHEBI:15377"/>
        <dbReference type="ChEBI" id="CHEBI:16708"/>
        <dbReference type="ChEBI" id="CHEBI:17509"/>
        <dbReference type="ChEBI" id="CHEBI:78440"/>
        <dbReference type="EC" id="3.2.2.9"/>
    </reaction>
</comment>
<comment type="catalytic activity">
    <reaction evidence="1">
        <text>5'-deoxyadenosine + H2O = 5-deoxy-D-ribose + adenine</text>
        <dbReference type="Rhea" id="RHEA:29859"/>
        <dbReference type="ChEBI" id="CHEBI:15377"/>
        <dbReference type="ChEBI" id="CHEBI:16708"/>
        <dbReference type="ChEBI" id="CHEBI:17319"/>
        <dbReference type="ChEBI" id="CHEBI:149540"/>
        <dbReference type="EC" id="3.2.2.9"/>
    </reaction>
    <physiologicalReaction direction="left-to-right" evidence="1">
        <dbReference type="Rhea" id="RHEA:29860"/>
    </physiologicalReaction>
</comment>
<comment type="pathway">
    <text evidence="1">Amino-acid biosynthesis; L-methionine biosynthesis via salvage pathway; S-methyl-5-thio-alpha-D-ribose 1-phosphate from S-methyl-5'-thioadenosine (hydrolase route): step 1/2.</text>
</comment>
<comment type="similarity">
    <text evidence="1">Belongs to the PNP/UDP phosphorylase family. MtnN subfamily.</text>
</comment>
<dbReference type="EC" id="3.2.2.9" evidence="1"/>
<dbReference type="EMBL" id="BX571857">
    <property type="protein sequence ID" value="CAG43337.1"/>
    <property type="molecule type" value="Genomic_DNA"/>
</dbReference>
<dbReference type="RefSeq" id="WP_000579275.1">
    <property type="nucleotide sequence ID" value="NC_002953.3"/>
</dbReference>
<dbReference type="SMR" id="Q6G8W9"/>
<dbReference type="KEGG" id="sas:SAS1536"/>
<dbReference type="HOGENOM" id="CLU_031248_2_2_9"/>
<dbReference type="UniPathway" id="UPA00904">
    <property type="reaction ID" value="UER00871"/>
</dbReference>
<dbReference type="GO" id="GO:0005829">
    <property type="term" value="C:cytosol"/>
    <property type="evidence" value="ECO:0007669"/>
    <property type="project" value="TreeGrafter"/>
</dbReference>
<dbReference type="GO" id="GO:0008782">
    <property type="term" value="F:adenosylhomocysteine nucleosidase activity"/>
    <property type="evidence" value="ECO:0007669"/>
    <property type="project" value="UniProtKB-UniRule"/>
</dbReference>
<dbReference type="GO" id="GO:0008930">
    <property type="term" value="F:methylthioadenosine nucleosidase activity"/>
    <property type="evidence" value="ECO:0007669"/>
    <property type="project" value="UniProtKB-UniRule"/>
</dbReference>
<dbReference type="GO" id="GO:0019509">
    <property type="term" value="P:L-methionine salvage from methylthioadenosine"/>
    <property type="evidence" value="ECO:0007669"/>
    <property type="project" value="UniProtKB-UniRule"/>
</dbReference>
<dbReference type="GO" id="GO:0019284">
    <property type="term" value="P:L-methionine salvage from S-adenosylmethionine"/>
    <property type="evidence" value="ECO:0007669"/>
    <property type="project" value="TreeGrafter"/>
</dbReference>
<dbReference type="GO" id="GO:0009164">
    <property type="term" value="P:nucleoside catabolic process"/>
    <property type="evidence" value="ECO:0007669"/>
    <property type="project" value="InterPro"/>
</dbReference>
<dbReference type="CDD" id="cd09008">
    <property type="entry name" value="MTAN"/>
    <property type="match status" value="1"/>
</dbReference>
<dbReference type="FunFam" id="3.40.50.1580:FF:000001">
    <property type="entry name" value="MTA/SAH nucleosidase family protein"/>
    <property type="match status" value="1"/>
</dbReference>
<dbReference type="Gene3D" id="3.40.50.1580">
    <property type="entry name" value="Nucleoside phosphorylase domain"/>
    <property type="match status" value="1"/>
</dbReference>
<dbReference type="HAMAP" id="MF_01684">
    <property type="entry name" value="Salvage_MtnN"/>
    <property type="match status" value="1"/>
</dbReference>
<dbReference type="InterPro" id="IPR010049">
    <property type="entry name" value="MTA_SAH_Nsdase"/>
</dbReference>
<dbReference type="InterPro" id="IPR000845">
    <property type="entry name" value="Nucleoside_phosphorylase_d"/>
</dbReference>
<dbReference type="InterPro" id="IPR035994">
    <property type="entry name" value="Nucleoside_phosphorylase_sf"/>
</dbReference>
<dbReference type="NCBIfam" id="TIGR01704">
    <property type="entry name" value="MTA_SAH-Nsdase"/>
    <property type="match status" value="1"/>
</dbReference>
<dbReference type="NCBIfam" id="NF004079">
    <property type="entry name" value="PRK05584.1"/>
    <property type="match status" value="1"/>
</dbReference>
<dbReference type="PANTHER" id="PTHR46832">
    <property type="entry name" value="5'-METHYLTHIOADENOSINE/S-ADENOSYLHOMOCYSTEINE NUCLEOSIDASE"/>
    <property type="match status" value="1"/>
</dbReference>
<dbReference type="PANTHER" id="PTHR46832:SF1">
    <property type="entry name" value="5'-METHYLTHIOADENOSINE_S-ADENOSYLHOMOCYSTEINE NUCLEOSIDASE"/>
    <property type="match status" value="1"/>
</dbReference>
<dbReference type="Pfam" id="PF01048">
    <property type="entry name" value="PNP_UDP_1"/>
    <property type="match status" value="1"/>
</dbReference>
<dbReference type="SUPFAM" id="SSF53167">
    <property type="entry name" value="Purine and uridine phosphorylases"/>
    <property type="match status" value="1"/>
</dbReference>
<feature type="chain" id="PRO_0000359367" description="5'-methylthioadenosine/S-adenosylhomocysteine nucleosidase">
    <location>
        <begin position="1"/>
        <end position="228"/>
    </location>
</feature>
<feature type="active site" description="Proton acceptor" evidence="1">
    <location>
        <position position="11"/>
    </location>
</feature>
<feature type="active site" description="Proton donor" evidence="1">
    <location>
        <position position="196"/>
    </location>
</feature>
<feature type="binding site" evidence="1">
    <location>
        <position position="77"/>
    </location>
    <ligand>
        <name>substrate</name>
    </ligand>
</feature>
<feature type="binding site" evidence="1">
    <location>
        <position position="151"/>
    </location>
    <ligand>
        <name>substrate</name>
    </ligand>
</feature>
<feature type="binding site" evidence="1">
    <location>
        <begin position="172"/>
        <end position="173"/>
    </location>
    <ligand>
        <name>substrate</name>
    </ligand>
</feature>
<reference key="1">
    <citation type="journal article" date="2004" name="Proc. Natl. Acad. Sci. U.S.A.">
        <title>Complete genomes of two clinical Staphylococcus aureus strains: evidence for the rapid evolution of virulence and drug resistance.</title>
        <authorList>
            <person name="Holden M.T.G."/>
            <person name="Feil E.J."/>
            <person name="Lindsay J.A."/>
            <person name="Peacock S.J."/>
            <person name="Day N.P.J."/>
            <person name="Enright M.C."/>
            <person name="Foster T.J."/>
            <person name="Moore C.E."/>
            <person name="Hurst L."/>
            <person name="Atkin R."/>
            <person name="Barron A."/>
            <person name="Bason N."/>
            <person name="Bentley S.D."/>
            <person name="Chillingworth C."/>
            <person name="Chillingworth T."/>
            <person name="Churcher C."/>
            <person name="Clark L."/>
            <person name="Corton C."/>
            <person name="Cronin A."/>
            <person name="Doggett J."/>
            <person name="Dowd L."/>
            <person name="Feltwell T."/>
            <person name="Hance Z."/>
            <person name="Harris B."/>
            <person name="Hauser H."/>
            <person name="Holroyd S."/>
            <person name="Jagels K."/>
            <person name="James K.D."/>
            <person name="Lennard N."/>
            <person name="Line A."/>
            <person name="Mayes R."/>
            <person name="Moule S."/>
            <person name="Mungall K."/>
            <person name="Ormond D."/>
            <person name="Quail M.A."/>
            <person name="Rabbinowitsch E."/>
            <person name="Rutherford K.M."/>
            <person name="Sanders M."/>
            <person name="Sharp S."/>
            <person name="Simmonds M."/>
            <person name="Stevens K."/>
            <person name="Whitehead S."/>
            <person name="Barrell B.G."/>
            <person name="Spratt B.G."/>
            <person name="Parkhill J."/>
        </authorList>
    </citation>
    <scope>NUCLEOTIDE SEQUENCE [LARGE SCALE GENOMIC DNA]</scope>
    <source>
        <strain>MSSA476</strain>
    </source>
</reference>
<gene>
    <name evidence="1" type="primary">mtnN</name>
    <name type="ordered locus">SAS1536</name>
</gene>
<protein>
    <recommendedName>
        <fullName evidence="1">5'-methylthioadenosine/S-adenosylhomocysteine nucleosidase</fullName>
        <shortName evidence="1">MTA/SAH nucleosidase</shortName>
        <shortName evidence="1">MTAN</shortName>
        <ecNumber evidence="1">3.2.2.9</ecNumber>
    </recommendedName>
    <alternativeName>
        <fullName evidence="1">5'-deoxyadenosine nucleosidase</fullName>
        <shortName evidence="1">DOA nucleosidase</shortName>
        <shortName evidence="1">dAdo nucleosidase</shortName>
    </alternativeName>
    <alternativeName>
        <fullName evidence="1">5'-methylthioadenosine nucleosidase</fullName>
        <shortName evidence="1">MTA nucleosidase</shortName>
    </alternativeName>
    <alternativeName>
        <fullName evidence="1">S-adenosylhomocysteine nucleosidase</fullName>
        <shortName evidence="1">AdoHcy nucleosidase</shortName>
        <shortName evidence="1">SAH nucleosidase</shortName>
        <shortName evidence="1">SRH nucleosidase</shortName>
    </alternativeName>
</protein>
<keyword id="KW-0028">Amino-acid biosynthesis</keyword>
<keyword id="KW-0378">Hydrolase</keyword>
<keyword id="KW-0486">Methionine biosynthesis</keyword>
<name>MTNN_STAAS</name>
<evidence type="ECO:0000255" key="1">
    <source>
        <dbReference type="HAMAP-Rule" id="MF_01684"/>
    </source>
</evidence>
<organism>
    <name type="scientific">Staphylococcus aureus (strain MSSA476)</name>
    <dbReference type="NCBI Taxonomy" id="282459"/>
    <lineage>
        <taxon>Bacteria</taxon>
        <taxon>Bacillati</taxon>
        <taxon>Bacillota</taxon>
        <taxon>Bacilli</taxon>
        <taxon>Bacillales</taxon>
        <taxon>Staphylococcaceae</taxon>
        <taxon>Staphylococcus</taxon>
    </lineage>
</organism>
<accession>Q6G8W9</accession>
<proteinExistence type="inferred from homology"/>